<organism>
    <name type="scientific">Borreliella burgdorferi (strain ZS7)</name>
    <name type="common">Borrelia burgdorferi</name>
    <dbReference type="NCBI Taxonomy" id="445985"/>
    <lineage>
        <taxon>Bacteria</taxon>
        <taxon>Pseudomonadati</taxon>
        <taxon>Spirochaetota</taxon>
        <taxon>Spirochaetia</taxon>
        <taxon>Spirochaetales</taxon>
        <taxon>Borreliaceae</taxon>
        <taxon>Borreliella</taxon>
    </lineage>
</organism>
<proteinExistence type="inferred from homology"/>
<gene>
    <name evidence="1" type="primary">rpmE2</name>
    <name type="ordered locus">BbuZS7_0234</name>
</gene>
<protein>
    <recommendedName>
        <fullName evidence="1">Large ribosomal subunit protein bL31B</fullName>
    </recommendedName>
    <alternativeName>
        <fullName evidence="2">50S ribosomal protein L31 type B</fullName>
    </alternativeName>
</protein>
<sequence>MRKDIHPKNNLVVFKDGSNGAMFLTKSTLNSKETIKYIDGKEYPLITVEITSKSHPFYTGQQKFVDAAGRIDKFNKRYKKS</sequence>
<evidence type="ECO:0000255" key="1">
    <source>
        <dbReference type="HAMAP-Rule" id="MF_00502"/>
    </source>
</evidence>
<evidence type="ECO:0000305" key="2"/>
<feature type="chain" id="PRO_1000126787" description="Large ribosomal subunit protein bL31B">
    <location>
        <begin position="1"/>
        <end position="81"/>
    </location>
</feature>
<name>RL31B_BORBZ</name>
<reference key="1">
    <citation type="journal article" date="2011" name="J. Bacteriol.">
        <title>Whole-genome sequences of thirteen isolates of Borrelia burgdorferi.</title>
        <authorList>
            <person name="Schutzer S.E."/>
            <person name="Fraser-Liggett C.M."/>
            <person name="Casjens S.R."/>
            <person name="Qiu W.G."/>
            <person name="Dunn J.J."/>
            <person name="Mongodin E.F."/>
            <person name="Luft B.J."/>
        </authorList>
    </citation>
    <scope>NUCLEOTIDE SEQUENCE [LARGE SCALE GENOMIC DNA]</scope>
    <source>
        <strain>ZS7</strain>
    </source>
</reference>
<keyword id="KW-0687">Ribonucleoprotein</keyword>
<keyword id="KW-0689">Ribosomal protein</keyword>
<comment type="subunit">
    <text evidence="1">Part of the 50S ribosomal subunit.</text>
</comment>
<comment type="similarity">
    <text evidence="1">Belongs to the bacterial ribosomal protein bL31 family. Type B subfamily.</text>
</comment>
<accession>B7J1F7</accession>
<dbReference type="EMBL" id="CP001205">
    <property type="protein sequence ID" value="ACK74838.1"/>
    <property type="molecule type" value="Genomic_DNA"/>
</dbReference>
<dbReference type="RefSeq" id="WP_002556828.1">
    <property type="nucleotide sequence ID" value="NC_011728.1"/>
</dbReference>
<dbReference type="SMR" id="B7J1F7"/>
<dbReference type="KEGG" id="bbz:BbuZS7_0234"/>
<dbReference type="HOGENOM" id="CLU_114306_2_2_12"/>
<dbReference type="Proteomes" id="UP000006901">
    <property type="component" value="Chromosome"/>
</dbReference>
<dbReference type="GO" id="GO:1990904">
    <property type="term" value="C:ribonucleoprotein complex"/>
    <property type="evidence" value="ECO:0007669"/>
    <property type="project" value="UniProtKB-KW"/>
</dbReference>
<dbReference type="GO" id="GO:0005840">
    <property type="term" value="C:ribosome"/>
    <property type="evidence" value="ECO:0007669"/>
    <property type="project" value="UniProtKB-KW"/>
</dbReference>
<dbReference type="GO" id="GO:0003735">
    <property type="term" value="F:structural constituent of ribosome"/>
    <property type="evidence" value="ECO:0007669"/>
    <property type="project" value="InterPro"/>
</dbReference>
<dbReference type="GO" id="GO:0006412">
    <property type="term" value="P:translation"/>
    <property type="evidence" value="ECO:0007669"/>
    <property type="project" value="UniProtKB-UniRule"/>
</dbReference>
<dbReference type="Gene3D" id="4.10.830.30">
    <property type="entry name" value="Ribosomal protein L31"/>
    <property type="match status" value="1"/>
</dbReference>
<dbReference type="HAMAP" id="MF_00502">
    <property type="entry name" value="Ribosomal_bL31_2"/>
    <property type="match status" value="1"/>
</dbReference>
<dbReference type="InterPro" id="IPR034704">
    <property type="entry name" value="Ribosomal_bL28/bL31-like_sf"/>
</dbReference>
<dbReference type="InterPro" id="IPR002150">
    <property type="entry name" value="Ribosomal_bL31"/>
</dbReference>
<dbReference type="InterPro" id="IPR027493">
    <property type="entry name" value="Ribosomal_bL31_B"/>
</dbReference>
<dbReference type="InterPro" id="IPR042105">
    <property type="entry name" value="Ribosomal_bL31_sf"/>
</dbReference>
<dbReference type="NCBIfam" id="TIGR00105">
    <property type="entry name" value="L31"/>
    <property type="match status" value="1"/>
</dbReference>
<dbReference type="NCBIfam" id="NF002462">
    <property type="entry name" value="PRK01678.1"/>
    <property type="match status" value="1"/>
</dbReference>
<dbReference type="PANTHER" id="PTHR33280">
    <property type="entry name" value="50S RIBOSOMAL PROTEIN L31, CHLOROPLASTIC"/>
    <property type="match status" value="1"/>
</dbReference>
<dbReference type="PANTHER" id="PTHR33280:SF1">
    <property type="entry name" value="LARGE RIBOSOMAL SUBUNIT PROTEIN BL31C"/>
    <property type="match status" value="1"/>
</dbReference>
<dbReference type="Pfam" id="PF01197">
    <property type="entry name" value="Ribosomal_L31"/>
    <property type="match status" value="1"/>
</dbReference>
<dbReference type="PRINTS" id="PR01249">
    <property type="entry name" value="RIBOSOMALL31"/>
</dbReference>
<dbReference type="SUPFAM" id="SSF143800">
    <property type="entry name" value="L28p-like"/>
    <property type="match status" value="1"/>
</dbReference>
<dbReference type="PROSITE" id="PS01143">
    <property type="entry name" value="RIBOSOMAL_L31"/>
    <property type="match status" value="1"/>
</dbReference>